<feature type="chain" id="PRO_0000137947" description="Glycerol-3-phosphate dehydrogenase [NAD(P)+]">
    <location>
        <begin position="1"/>
        <end position="332"/>
    </location>
</feature>
<feature type="active site" description="Proton acceptor" evidence="1">
    <location>
        <position position="189"/>
    </location>
</feature>
<feature type="binding site" evidence="1">
    <location>
        <position position="11"/>
    </location>
    <ligand>
        <name>NADPH</name>
        <dbReference type="ChEBI" id="CHEBI:57783"/>
    </ligand>
</feature>
<feature type="binding site" evidence="1">
    <location>
        <position position="12"/>
    </location>
    <ligand>
        <name>NADPH</name>
        <dbReference type="ChEBI" id="CHEBI:57783"/>
    </ligand>
</feature>
<feature type="binding site" evidence="1">
    <location>
        <position position="32"/>
    </location>
    <ligand>
        <name>NADPH</name>
        <dbReference type="ChEBI" id="CHEBI:57783"/>
    </ligand>
</feature>
<feature type="binding site" evidence="1">
    <location>
        <position position="106"/>
    </location>
    <ligand>
        <name>NADPH</name>
        <dbReference type="ChEBI" id="CHEBI:57783"/>
    </ligand>
</feature>
<feature type="binding site" evidence="1">
    <location>
        <position position="106"/>
    </location>
    <ligand>
        <name>sn-glycerol 3-phosphate</name>
        <dbReference type="ChEBI" id="CHEBI:57597"/>
    </ligand>
</feature>
<feature type="binding site" evidence="1">
    <location>
        <position position="134"/>
    </location>
    <ligand>
        <name>sn-glycerol 3-phosphate</name>
        <dbReference type="ChEBI" id="CHEBI:57597"/>
    </ligand>
</feature>
<feature type="binding site" evidence="1">
    <location>
        <position position="136"/>
    </location>
    <ligand>
        <name>sn-glycerol 3-phosphate</name>
        <dbReference type="ChEBI" id="CHEBI:57597"/>
    </ligand>
</feature>
<feature type="binding site" evidence="1">
    <location>
        <position position="138"/>
    </location>
    <ligand>
        <name>NADPH</name>
        <dbReference type="ChEBI" id="CHEBI:57783"/>
    </ligand>
</feature>
<feature type="binding site" evidence="1">
    <location>
        <position position="189"/>
    </location>
    <ligand>
        <name>sn-glycerol 3-phosphate</name>
        <dbReference type="ChEBI" id="CHEBI:57597"/>
    </ligand>
</feature>
<feature type="binding site" evidence="1">
    <location>
        <position position="242"/>
    </location>
    <ligand>
        <name>sn-glycerol 3-phosphate</name>
        <dbReference type="ChEBI" id="CHEBI:57597"/>
    </ligand>
</feature>
<feature type="binding site" evidence="1">
    <location>
        <position position="252"/>
    </location>
    <ligand>
        <name>sn-glycerol 3-phosphate</name>
        <dbReference type="ChEBI" id="CHEBI:57597"/>
    </ligand>
</feature>
<feature type="binding site" evidence="1">
    <location>
        <position position="253"/>
    </location>
    <ligand>
        <name>NADPH</name>
        <dbReference type="ChEBI" id="CHEBI:57783"/>
    </ligand>
</feature>
<feature type="binding site" evidence="1">
    <location>
        <position position="253"/>
    </location>
    <ligand>
        <name>sn-glycerol 3-phosphate</name>
        <dbReference type="ChEBI" id="CHEBI:57597"/>
    </ligand>
</feature>
<feature type="binding site" evidence="1">
    <location>
        <position position="254"/>
    </location>
    <ligand>
        <name>sn-glycerol 3-phosphate</name>
        <dbReference type="ChEBI" id="CHEBI:57597"/>
    </ligand>
</feature>
<feature type="binding site" evidence="1">
    <location>
        <position position="277"/>
    </location>
    <ligand>
        <name>NADPH</name>
        <dbReference type="ChEBI" id="CHEBI:57783"/>
    </ligand>
</feature>
<feature type="binding site" evidence="1">
    <location>
        <position position="279"/>
    </location>
    <ligand>
        <name>NADPH</name>
        <dbReference type="ChEBI" id="CHEBI:57783"/>
    </ligand>
</feature>
<name>GPDA_CLOAB</name>
<proteinExistence type="inferred from homology"/>
<gene>
    <name evidence="1" type="primary">gpsA</name>
    <name type="ordered locus">CA_C1712</name>
</gene>
<protein>
    <recommendedName>
        <fullName evidence="1">Glycerol-3-phosphate dehydrogenase [NAD(P)+]</fullName>
        <ecNumber evidence="1">1.1.1.94</ecNumber>
    </recommendedName>
    <alternativeName>
        <fullName evidence="1">NAD(P)(+)-dependent glycerol-3-phosphate dehydrogenase</fullName>
    </alternativeName>
    <alternativeName>
        <fullName evidence="1">NAD(P)H-dependent dihydroxyacetone-phosphate reductase</fullName>
    </alternativeName>
</protein>
<accession>Q97ID6</accession>
<organism>
    <name type="scientific">Clostridium acetobutylicum (strain ATCC 824 / DSM 792 / JCM 1419 / IAM 19013 / LMG 5710 / NBRC 13948 / NRRL B-527 / VKM B-1787 / 2291 / W)</name>
    <dbReference type="NCBI Taxonomy" id="272562"/>
    <lineage>
        <taxon>Bacteria</taxon>
        <taxon>Bacillati</taxon>
        <taxon>Bacillota</taxon>
        <taxon>Clostridia</taxon>
        <taxon>Eubacteriales</taxon>
        <taxon>Clostridiaceae</taxon>
        <taxon>Clostridium</taxon>
    </lineage>
</organism>
<reference key="1">
    <citation type="journal article" date="2001" name="J. Bacteriol.">
        <title>Genome sequence and comparative analysis of the solvent-producing bacterium Clostridium acetobutylicum.</title>
        <authorList>
            <person name="Noelling J."/>
            <person name="Breton G."/>
            <person name="Omelchenko M.V."/>
            <person name="Makarova K.S."/>
            <person name="Zeng Q."/>
            <person name="Gibson R."/>
            <person name="Lee H.M."/>
            <person name="Dubois J."/>
            <person name="Qiu D."/>
            <person name="Hitti J."/>
            <person name="Wolf Y.I."/>
            <person name="Tatusov R.L."/>
            <person name="Sabathe F."/>
            <person name="Doucette-Stamm L.A."/>
            <person name="Soucaille P."/>
            <person name="Daly M.J."/>
            <person name="Bennett G.N."/>
            <person name="Koonin E.V."/>
            <person name="Smith D.R."/>
        </authorList>
    </citation>
    <scope>NUCLEOTIDE SEQUENCE [LARGE SCALE GENOMIC DNA]</scope>
    <source>
        <strain>ATCC 824 / DSM 792 / JCM 1419 / IAM 19013 / LMG 5710 / NBRC 13948 / NRRL B-527 / VKM B-1787 / 2291 / W</strain>
    </source>
</reference>
<sequence length="332" mass="36451">MGGVTFIGGGSFGTALAIMLAKKGHNVVIWDRNKEILEDINTLRTNTRYLPNNIIPCCVKAVDDIEKAAKESKYIVLAVPSFAIREVCRKIKGFLREDQIIISIAKGMEEETKKRLSEVVKEELYKNPVVVLSGPSHAEEVANDIPTTVVVTSTDMKYAEEVQDVFMTNSFRVYTNSDIVGVEIGGAVKNIIALASGIGDGIGYGDNTKAALMTRGMSEIMRIGVKLGGKPETFFGLTGMGDLIVTCTSMHSRNRKAGILIGRGMSCREACDKIGMVVEGVKACHTFYELKESLGVSMPITTSLYKVLFENGDPKKEVYELMARDKKNEYYF</sequence>
<keyword id="KW-0963">Cytoplasm</keyword>
<keyword id="KW-0444">Lipid biosynthesis</keyword>
<keyword id="KW-0443">Lipid metabolism</keyword>
<keyword id="KW-0520">NAD</keyword>
<keyword id="KW-0521">NADP</keyword>
<keyword id="KW-0547">Nucleotide-binding</keyword>
<keyword id="KW-0560">Oxidoreductase</keyword>
<keyword id="KW-0594">Phospholipid biosynthesis</keyword>
<keyword id="KW-1208">Phospholipid metabolism</keyword>
<keyword id="KW-1185">Reference proteome</keyword>
<evidence type="ECO:0000255" key="1">
    <source>
        <dbReference type="HAMAP-Rule" id="MF_00394"/>
    </source>
</evidence>
<dbReference type="EC" id="1.1.1.94" evidence="1"/>
<dbReference type="EMBL" id="AE001437">
    <property type="protein sequence ID" value="AAK79678.1"/>
    <property type="molecule type" value="Genomic_DNA"/>
</dbReference>
<dbReference type="PIR" id="C97111">
    <property type="entry name" value="C97111"/>
</dbReference>
<dbReference type="RefSeq" id="NP_348338.1">
    <property type="nucleotide sequence ID" value="NC_003030.1"/>
</dbReference>
<dbReference type="RefSeq" id="WP_010965019.1">
    <property type="nucleotide sequence ID" value="NC_003030.1"/>
</dbReference>
<dbReference type="SMR" id="Q97ID6"/>
<dbReference type="STRING" id="272562.CA_C1712"/>
<dbReference type="KEGG" id="cac:CA_C1712"/>
<dbReference type="PATRIC" id="fig|272562.8.peg.1914"/>
<dbReference type="eggNOG" id="COG0240">
    <property type="taxonomic scope" value="Bacteria"/>
</dbReference>
<dbReference type="HOGENOM" id="CLU_033449_0_2_9"/>
<dbReference type="OrthoDB" id="9812273at2"/>
<dbReference type="BioCyc" id="MetaCyc:MONOMER-17188"/>
<dbReference type="UniPathway" id="UPA00940"/>
<dbReference type="Proteomes" id="UP000000814">
    <property type="component" value="Chromosome"/>
</dbReference>
<dbReference type="GO" id="GO:0005829">
    <property type="term" value="C:cytosol"/>
    <property type="evidence" value="ECO:0007669"/>
    <property type="project" value="TreeGrafter"/>
</dbReference>
<dbReference type="GO" id="GO:0047952">
    <property type="term" value="F:glycerol-3-phosphate dehydrogenase [NAD(P)+] activity"/>
    <property type="evidence" value="ECO:0007669"/>
    <property type="project" value="UniProtKB-UniRule"/>
</dbReference>
<dbReference type="GO" id="GO:0051287">
    <property type="term" value="F:NAD binding"/>
    <property type="evidence" value="ECO:0007669"/>
    <property type="project" value="InterPro"/>
</dbReference>
<dbReference type="GO" id="GO:0005975">
    <property type="term" value="P:carbohydrate metabolic process"/>
    <property type="evidence" value="ECO:0007669"/>
    <property type="project" value="InterPro"/>
</dbReference>
<dbReference type="GO" id="GO:0046167">
    <property type="term" value="P:glycerol-3-phosphate biosynthetic process"/>
    <property type="evidence" value="ECO:0007669"/>
    <property type="project" value="UniProtKB-UniRule"/>
</dbReference>
<dbReference type="GO" id="GO:0046168">
    <property type="term" value="P:glycerol-3-phosphate catabolic process"/>
    <property type="evidence" value="ECO:0007669"/>
    <property type="project" value="InterPro"/>
</dbReference>
<dbReference type="GO" id="GO:0006650">
    <property type="term" value="P:glycerophospholipid metabolic process"/>
    <property type="evidence" value="ECO:0007669"/>
    <property type="project" value="UniProtKB-UniRule"/>
</dbReference>
<dbReference type="GO" id="GO:0008654">
    <property type="term" value="P:phospholipid biosynthetic process"/>
    <property type="evidence" value="ECO:0007669"/>
    <property type="project" value="UniProtKB-KW"/>
</dbReference>
<dbReference type="FunFam" id="1.10.1040.10:FF:000001">
    <property type="entry name" value="Glycerol-3-phosphate dehydrogenase [NAD(P)+]"/>
    <property type="match status" value="1"/>
</dbReference>
<dbReference type="FunFam" id="3.40.50.720:FF:000019">
    <property type="entry name" value="Glycerol-3-phosphate dehydrogenase [NAD(P)+]"/>
    <property type="match status" value="1"/>
</dbReference>
<dbReference type="Gene3D" id="1.10.1040.10">
    <property type="entry name" value="N-(1-d-carboxylethyl)-l-norvaline Dehydrogenase, domain 2"/>
    <property type="match status" value="1"/>
</dbReference>
<dbReference type="Gene3D" id="3.40.50.720">
    <property type="entry name" value="NAD(P)-binding Rossmann-like Domain"/>
    <property type="match status" value="1"/>
</dbReference>
<dbReference type="HAMAP" id="MF_00394">
    <property type="entry name" value="NAD_Glyc3P_dehydrog"/>
    <property type="match status" value="1"/>
</dbReference>
<dbReference type="InterPro" id="IPR008927">
    <property type="entry name" value="6-PGluconate_DH-like_C_sf"/>
</dbReference>
<dbReference type="InterPro" id="IPR013328">
    <property type="entry name" value="6PGD_dom2"/>
</dbReference>
<dbReference type="InterPro" id="IPR006168">
    <property type="entry name" value="G3P_DH_NAD-dep"/>
</dbReference>
<dbReference type="InterPro" id="IPR006109">
    <property type="entry name" value="G3P_DH_NAD-dep_C"/>
</dbReference>
<dbReference type="InterPro" id="IPR011128">
    <property type="entry name" value="G3P_DH_NAD-dep_N"/>
</dbReference>
<dbReference type="InterPro" id="IPR036291">
    <property type="entry name" value="NAD(P)-bd_dom_sf"/>
</dbReference>
<dbReference type="NCBIfam" id="NF000940">
    <property type="entry name" value="PRK00094.1-2"/>
    <property type="match status" value="1"/>
</dbReference>
<dbReference type="NCBIfam" id="NF000941">
    <property type="entry name" value="PRK00094.1-3"/>
    <property type="match status" value="1"/>
</dbReference>
<dbReference type="NCBIfam" id="NF000942">
    <property type="entry name" value="PRK00094.1-4"/>
    <property type="match status" value="1"/>
</dbReference>
<dbReference type="PANTHER" id="PTHR11728">
    <property type="entry name" value="GLYCEROL-3-PHOSPHATE DEHYDROGENASE"/>
    <property type="match status" value="1"/>
</dbReference>
<dbReference type="PANTHER" id="PTHR11728:SF1">
    <property type="entry name" value="GLYCEROL-3-PHOSPHATE DEHYDROGENASE [NAD(+)] 2, CHLOROPLASTIC"/>
    <property type="match status" value="1"/>
</dbReference>
<dbReference type="Pfam" id="PF07479">
    <property type="entry name" value="NAD_Gly3P_dh_C"/>
    <property type="match status" value="1"/>
</dbReference>
<dbReference type="Pfam" id="PF01210">
    <property type="entry name" value="NAD_Gly3P_dh_N"/>
    <property type="match status" value="1"/>
</dbReference>
<dbReference type="PIRSF" id="PIRSF000114">
    <property type="entry name" value="Glycerol-3-P_dh"/>
    <property type="match status" value="1"/>
</dbReference>
<dbReference type="PRINTS" id="PR00077">
    <property type="entry name" value="GPDHDRGNASE"/>
</dbReference>
<dbReference type="SUPFAM" id="SSF48179">
    <property type="entry name" value="6-phosphogluconate dehydrogenase C-terminal domain-like"/>
    <property type="match status" value="1"/>
</dbReference>
<dbReference type="SUPFAM" id="SSF51735">
    <property type="entry name" value="NAD(P)-binding Rossmann-fold domains"/>
    <property type="match status" value="1"/>
</dbReference>
<dbReference type="PROSITE" id="PS00957">
    <property type="entry name" value="NAD_G3PDH"/>
    <property type="match status" value="1"/>
</dbReference>
<comment type="function">
    <text evidence="1">Catalyzes the reduction of the glycolytic intermediate dihydroxyacetone phosphate (DHAP) to sn-glycerol 3-phosphate (G3P), the key precursor for phospholipid synthesis.</text>
</comment>
<comment type="catalytic activity">
    <reaction evidence="1">
        <text>sn-glycerol 3-phosphate + NAD(+) = dihydroxyacetone phosphate + NADH + H(+)</text>
        <dbReference type="Rhea" id="RHEA:11092"/>
        <dbReference type="ChEBI" id="CHEBI:15378"/>
        <dbReference type="ChEBI" id="CHEBI:57540"/>
        <dbReference type="ChEBI" id="CHEBI:57597"/>
        <dbReference type="ChEBI" id="CHEBI:57642"/>
        <dbReference type="ChEBI" id="CHEBI:57945"/>
        <dbReference type="EC" id="1.1.1.94"/>
    </reaction>
    <physiologicalReaction direction="right-to-left" evidence="1">
        <dbReference type="Rhea" id="RHEA:11094"/>
    </physiologicalReaction>
</comment>
<comment type="catalytic activity">
    <reaction evidence="1">
        <text>sn-glycerol 3-phosphate + NADP(+) = dihydroxyacetone phosphate + NADPH + H(+)</text>
        <dbReference type="Rhea" id="RHEA:11096"/>
        <dbReference type="ChEBI" id="CHEBI:15378"/>
        <dbReference type="ChEBI" id="CHEBI:57597"/>
        <dbReference type="ChEBI" id="CHEBI:57642"/>
        <dbReference type="ChEBI" id="CHEBI:57783"/>
        <dbReference type="ChEBI" id="CHEBI:58349"/>
        <dbReference type="EC" id="1.1.1.94"/>
    </reaction>
    <physiologicalReaction direction="right-to-left" evidence="1">
        <dbReference type="Rhea" id="RHEA:11098"/>
    </physiologicalReaction>
</comment>
<comment type="pathway">
    <text evidence="1">Membrane lipid metabolism; glycerophospholipid metabolism.</text>
</comment>
<comment type="subcellular location">
    <subcellularLocation>
        <location evidence="1">Cytoplasm</location>
    </subcellularLocation>
</comment>
<comment type="similarity">
    <text evidence="1">Belongs to the NAD-dependent glycerol-3-phosphate dehydrogenase family.</text>
</comment>